<comment type="function">
    <text evidence="1">Promotes the exchange of GDP for GTP in EF-1-alpha/GDP, thus allowing the regeneration of EF-1-alpha/GTP that could then be used to form the ternary complex EF-1-alpha/GTP/AAtRNA.</text>
</comment>
<comment type="similarity">
    <text evidence="1">Belongs to the EF-1-beta/EF-1-delta family.</text>
</comment>
<evidence type="ECO:0000255" key="1">
    <source>
        <dbReference type="HAMAP-Rule" id="MF_00043"/>
    </source>
</evidence>
<reference key="1">
    <citation type="journal article" date="2002" name="J. Mol. Microbiol. Biotechnol.">
        <title>The genome of Methanosarcina mazei: evidence for lateral gene transfer between Bacteria and Archaea.</title>
        <authorList>
            <person name="Deppenmeier U."/>
            <person name="Johann A."/>
            <person name="Hartsch T."/>
            <person name="Merkl R."/>
            <person name="Schmitz R.A."/>
            <person name="Martinez-Arias R."/>
            <person name="Henne A."/>
            <person name="Wiezer A."/>
            <person name="Baeumer S."/>
            <person name="Jacobi C."/>
            <person name="Brueggemann H."/>
            <person name="Lienard T."/>
            <person name="Christmann A."/>
            <person name="Boemecke M."/>
            <person name="Steckel S."/>
            <person name="Bhattacharyya A."/>
            <person name="Lykidis A."/>
            <person name="Overbeek R."/>
            <person name="Klenk H.-P."/>
            <person name="Gunsalus R.P."/>
            <person name="Fritz H.-J."/>
            <person name="Gottschalk G."/>
        </authorList>
    </citation>
    <scope>NUCLEOTIDE SEQUENCE [LARGE SCALE GENOMIC DNA]</scope>
    <source>
        <strain>ATCC BAA-159 / DSM 3647 / Goe1 / Go1 / JCM 11833 / OCM 88</strain>
    </source>
</reference>
<name>EF1B_METMA</name>
<keyword id="KW-0251">Elongation factor</keyword>
<keyword id="KW-0648">Protein biosynthesis</keyword>
<protein>
    <recommendedName>
        <fullName evidence="1">Elongation factor 1-beta</fullName>
        <shortName evidence="1">EF-1-beta</shortName>
    </recommendedName>
    <alternativeName>
        <fullName evidence="1">aEF-1beta</fullName>
    </alternativeName>
</protein>
<dbReference type="EMBL" id="AE008384">
    <property type="protein sequence ID" value="AAM32210.1"/>
    <property type="molecule type" value="Genomic_DNA"/>
</dbReference>
<dbReference type="RefSeq" id="WP_011034431.1">
    <property type="nucleotide sequence ID" value="NC_003901.1"/>
</dbReference>
<dbReference type="SMR" id="Q8PU42"/>
<dbReference type="KEGG" id="mma:MM_2514"/>
<dbReference type="PATRIC" id="fig|192952.21.peg.2877"/>
<dbReference type="eggNOG" id="arCOG01988">
    <property type="taxonomic scope" value="Archaea"/>
</dbReference>
<dbReference type="HOGENOM" id="CLU_165896_0_0_2"/>
<dbReference type="Proteomes" id="UP000000595">
    <property type="component" value="Chromosome"/>
</dbReference>
<dbReference type="GO" id="GO:0003746">
    <property type="term" value="F:translation elongation factor activity"/>
    <property type="evidence" value="ECO:0007669"/>
    <property type="project" value="UniProtKB-UniRule"/>
</dbReference>
<dbReference type="CDD" id="cd00292">
    <property type="entry name" value="EF1B"/>
    <property type="match status" value="1"/>
</dbReference>
<dbReference type="Gene3D" id="3.30.70.60">
    <property type="match status" value="1"/>
</dbReference>
<dbReference type="HAMAP" id="MF_00043">
    <property type="entry name" value="EF1_beta"/>
    <property type="match status" value="1"/>
</dbReference>
<dbReference type="InterPro" id="IPR036219">
    <property type="entry name" value="eEF-1beta-like_sf"/>
</dbReference>
<dbReference type="InterPro" id="IPR014038">
    <property type="entry name" value="EF1B_bsu/dsu_GNE"/>
</dbReference>
<dbReference type="InterPro" id="IPR014717">
    <property type="entry name" value="Transl_elong_EF1B/ribsomal_bS6"/>
</dbReference>
<dbReference type="InterPro" id="IPR004542">
    <property type="entry name" value="Transl_elong_EF1B_B_arc"/>
</dbReference>
<dbReference type="NCBIfam" id="TIGR00489">
    <property type="entry name" value="aEF-1_beta"/>
    <property type="match status" value="1"/>
</dbReference>
<dbReference type="NCBIfam" id="NF001670">
    <property type="entry name" value="PRK00435.1"/>
    <property type="match status" value="1"/>
</dbReference>
<dbReference type="PANTHER" id="PTHR39647">
    <property type="entry name" value="ELONGATION FACTOR 1-BETA"/>
    <property type="match status" value="1"/>
</dbReference>
<dbReference type="PANTHER" id="PTHR39647:SF1">
    <property type="entry name" value="ELONGATION FACTOR 1-BETA"/>
    <property type="match status" value="1"/>
</dbReference>
<dbReference type="Pfam" id="PF00736">
    <property type="entry name" value="EF1_GNE"/>
    <property type="match status" value="1"/>
</dbReference>
<dbReference type="PIRSF" id="PIRSF006521">
    <property type="entry name" value="Transl_elong_EF1B_B_arc"/>
    <property type="match status" value="1"/>
</dbReference>
<dbReference type="SMART" id="SM00888">
    <property type="entry name" value="EF1_GNE"/>
    <property type="match status" value="1"/>
</dbReference>
<dbReference type="SUPFAM" id="SSF54984">
    <property type="entry name" value="eEF-1beta-like"/>
    <property type="match status" value="1"/>
</dbReference>
<feature type="chain" id="PRO_0000366435" description="Elongation factor 1-beta">
    <location>
        <begin position="1"/>
        <end position="89"/>
    </location>
</feature>
<organism>
    <name type="scientific">Methanosarcina mazei (strain ATCC BAA-159 / DSM 3647 / Goe1 / Go1 / JCM 11833 / OCM 88)</name>
    <name type="common">Methanosarcina frisia</name>
    <dbReference type="NCBI Taxonomy" id="192952"/>
    <lineage>
        <taxon>Archaea</taxon>
        <taxon>Methanobacteriati</taxon>
        <taxon>Methanobacteriota</taxon>
        <taxon>Stenosarchaea group</taxon>
        <taxon>Methanomicrobia</taxon>
        <taxon>Methanosarcinales</taxon>
        <taxon>Methanosarcinaceae</taxon>
        <taxon>Methanosarcina</taxon>
    </lineage>
</organism>
<gene>
    <name evidence="1" type="primary">ef1b</name>
    <name type="ordered locus">MM_2514</name>
</gene>
<accession>Q8PU42</accession>
<sequence>MGDVAAKLKIMPESVDTDLVGLKENLKNVIPAGAQLHGDIVEEPIAFGLKALIVTLIVNDEEGGTEPAEEAFAKVSGVENVQVLEAYRI</sequence>
<proteinExistence type="inferred from homology"/>